<reference key="1">
    <citation type="journal article" date="2010" name="Environ. Microbiol.">
        <title>The genome of Syntrophomonas wolfei: new insights into syntrophic metabolism and biohydrogen production.</title>
        <authorList>
            <person name="Sieber J.R."/>
            <person name="Sims D.R."/>
            <person name="Han C."/>
            <person name="Kim E."/>
            <person name="Lykidis A."/>
            <person name="Lapidus A.L."/>
            <person name="McDonnald E."/>
            <person name="Rohlin L."/>
            <person name="Culley D.E."/>
            <person name="Gunsalus R."/>
            <person name="McInerney M.J."/>
        </authorList>
    </citation>
    <scope>NUCLEOTIDE SEQUENCE [LARGE SCALE GENOMIC DNA]</scope>
    <source>
        <strain>DSM 2245B / Goettingen</strain>
    </source>
</reference>
<organism>
    <name type="scientific">Syntrophomonas wolfei subsp. wolfei (strain DSM 2245B / Goettingen)</name>
    <dbReference type="NCBI Taxonomy" id="335541"/>
    <lineage>
        <taxon>Bacteria</taxon>
        <taxon>Bacillati</taxon>
        <taxon>Bacillota</taxon>
        <taxon>Clostridia</taxon>
        <taxon>Eubacteriales</taxon>
        <taxon>Syntrophomonadaceae</taxon>
        <taxon>Syntrophomonas</taxon>
    </lineage>
</organism>
<name>RNPH_SYNWW</name>
<feature type="chain" id="PRO_1000061138" description="Ribonuclease PH">
    <location>
        <begin position="1"/>
        <end position="239"/>
    </location>
</feature>
<feature type="binding site" evidence="1">
    <location>
        <position position="87"/>
    </location>
    <ligand>
        <name>phosphate</name>
        <dbReference type="ChEBI" id="CHEBI:43474"/>
        <note>substrate</note>
    </ligand>
</feature>
<feature type="binding site" evidence="1">
    <location>
        <begin position="125"/>
        <end position="127"/>
    </location>
    <ligand>
        <name>phosphate</name>
        <dbReference type="ChEBI" id="CHEBI:43474"/>
        <note>substrate</note>
    </ligand>
</feature>
<evidence type="ECO:0000255" key="1">
    <source>
        <dbReference type="HAMAP-Rule" id="MF_00564"/>
    </source>
</evidence>
<protein>
    <recommendedName>
        <fullName evidence="1">Ribonuclease PH</fullName>
        <shortName evidence="1">RNase PH</shortName>
        <ecNumber evidence="1">2.7.7.56</ecNumber>
    </recommendedName>
    <alternativeName>
        <fullName evidence="1">tRNA nucleotidyltransferase</fullName>
    </alternativeName>
</protein>
<proteinExistence type="inferred from homology"/>
<dbReference type="EC" id="2.7.7.56" evidence="1"/>
<dbReference type="EMBL" id="CP000448">
    <property type="protein sequence ID" value="ABI67788.1"/>
    <property type="molecule type" value="Genomic_DNA"/>
</dbReference>
<dbReference type="RefSeq" id="WP_011639896.1">
    <property type="nucleotide sequence ID" value="NC_008346.1"/>
</dbReference>
<dbReference type="SMR" id="Q0AZR6"/>
<dbReference type="STRING" id="335541.Swol_0453"/>
<dbReference type="KEGG" id="swo:Swol_0453"/>
<dbReference type="eggNOG" id="COG0689">
    <property type="taxonomic scope" value="Bacteria"/>
</dbReference>
<dbReference type="HOGENOM" id="CLU_050858_0_0_9"/>
<dbReference type="OrthoDB" id="9807456at2"/>
<dbReference type="Proteomes" id="UP000001968">
    <property type="component" value="Chromosome"/>
</dbReference>
<dbReference type="GO" id="GO:0000175">
    <property type="term" value="F:3'-5'-RNA exonuclease activity"/>
    <property type="evidence" value="ECO:0007669"/>
    <property type="project" value="UniProtKB-UniRule"/>
</dbReference>
<dbReference type="GO" id="GO:0000049">
    <property type="term" value="F:tRNA binding"/>
    <property type="evidence" value="ECO:0007669"/>
    <property type="project" value="UniProtKB-UniRule"/>
</dbReference>
<dbReference type="GO" id="GO:0009022">
    <property type="term" value="F:tRNA nucleotidyltransferase activity"/>
    <property type="evidence" value="ECO:0007669"/>
    <property type="project" value="UniProtKB-UniRule"/>
</dbReference>
<dbReference type="GO" id="GO:0016075">
    <property type="term" value="P:rRNA catabolic process"/>
    <property type="evidence" value="ECO:0007669"/>
    <property type="project" value="UniProtKB-UniRule"/>
</dbReference>
<dbReference type="GO" id="GO:0006364">
    <property type="term" value="P:rRNA processing"/>
    <property type="evidence" value="ECO:0007669"/>
    <property type="project" value="UniProtKB-KW"/>
</dbReference>
<dbReference type="GO" id="GO:0008033">
    <property type="term" value="P:tRNA processing"/>
    <property type="evidence" value="ECO:0007669"/>
    <property type="project" value="UniProtKB-UniRule"/>
</dbReference>
<dbReference type="CDD" id="cd11362">
    <property type="entry name" value="RNase_PH_bact"/>
    <property type="match status" value="1"/>
</dbReference>
<dbReference type="FunFam" id="3.30.230.70:FF:000003">
    <property type="entry name" value="Ribonuclease PH"/>
    <property type="match status" value="1"/>
</dbReference>
<dbReference type="Gene3D" id="3.30.230.70">
    <property type="entry name" value="GHMP Kinase, N-terminal domain"/>
    <property type="match status" value="1"/>
</dbReference>
<dbReference type="HAMAP" id="MF_00564">
    <property type="entry name" value="RNase_PH"/>
    <property type="match status" value="1"/>
</dbReference>
<dbReference type="InterPro" id="IPR001247">
    <property type="entry name" value="ExoRNase_PH_dom1"/>
</dbReference>
<dbReference type="InterPro" id="IPR015847">
    <property type="entry name" value="ExoRNase_PH_dom2"/>
</dbReference>
<dbReference type="InterPro" id="IPR036345">
    <property type="entry name" value="ExoRNase_PH_dom2_sf"/>
</dbReference>
<dbReference type="InterPro" id="IPR027408">
    <property type="entry name" value="PNPase/RNase_PH_dom_sf"/>
</dbReference>
<dbReference type="InterPro" id="IPR020568">
    <property type="entry name" value="Ribosomal_Su5_D2-typ_SF"/>
</dbReference>
<dbReference type="InterPro" id="IPR050080">
    <property type="entry name" value="RNase_PH"/>
</dbReference>
<dbReference type="InterPro" id="IPR002381">
    <property type="entry name" value="RNase_PH_bac-type"/>
</dbReference>
<dbReference type="InterPro" id="IPR018336">
    <property type="entry name" value="RNase_PH_CS"/>
</dbReference>
<dbReference type="NCBIfam" id="TIGR01966">
    <property type="entry name" value="RNasePH"/>
    <property type="match status" value="1"/>
</dbReference>
<dbReference type="PANTHER" id="PTHR11953">
    <property type="entry name" value="EXOSOME COMPLEX COMPONENT"/>
    <property type="match status" value="1"/>
</dbReference>
<dbReference type="PANTHER" id="PTHR11953:SF0">
    <property type="entry name" value="EXOSOME COMPLEX COMPONENT RRP41"/>
    <property type="match status" value="1"/>
</dbReference>
<dbReference type="Pfam" id="PF01138">
    <property type="entry name" value="RNase_PH"/>
    <property type="match status" value="1"/>
</dbReference>
<dbReference type="Pfam" id="PF03725">
    <property type="entry name" value="RNase_PH_C"/>
    <property type="match status" value="1"/>
</dbReference>
<dbReference type="SUPFAM" id="SSF55666">
    <property type="entry name" value="Ribonuclease PH domain 2-like"/>
    <property type="match status" value="1"/>
</dbReference>
<dbReference type="SUPFAM" id="SSF54211">
    <property type="entry name" value="Ribosomal protein S5 domain 2-like"/>
    <property type="match status" value="1"/>
</dbReference>
<dbReference type="PROSITE" id="PS01277">
    <property type="entry name" value="RIBONUCLEASE_PH"/>
    <property type="match status" value="1"/>
</dbReference>
<accession>Q0AZR6</accession>
<keyword id="KW-0548">Nucleotidyltransferase</keyword>
<keyword id="KW-1185">Reference proteome</keyword>
<keyword id="KW-0694">RNA-binding</keyword>
<keyword id="KW-0698">rRNA processing</keyword>
<keyword id="KW-0808">Transferase</keyword>
<keyword id="KW-0819">tRNA processing</keyword>
<keyword id="KW-0820">tRNA-binding</keyword>
<sequence length="239" mass="26077">MERPQNRGNDQMRTVRIIPGFQKYPDGSVLIEAGDTRVMCSAMMEEKVPPFLRGKGSGWVTAEYSLLPSSTETRTQREASKGKISGRTSEIQRLIGRSLRAVVDMPAMGERTLWIDCDVLQADGGTRTAAITGSFVALYLAFKKFKEQGIIETIPVKDFVAAISVGIIDGTPILDLEYIEDSQADVDMNVVMTGNGDFIEIQGTAEGTVFSRAELDQLLELAGKGIQELIALQKTILGV</sequence>
<gene>
    <name evidence="1" type="primary">rph</name>
    <name type="ordered locus">Swol_0453</name>
</gene>
<comment type="function">
    <text evidence="1">Phosphorolytic 3'-5' exoribonuclease that plays an important role in tRNA 3'-end maturation. Removes nucleotide residues following the 3'-CCA terminus of tRNAs; can also add nucleotides to the ends of RNA molecules by using nucleoside diphosphates as substrates, but this may not be physiologically important. Probably plays a role in initiation of 16S rRNA degradation (leading to ribosome degradation) during starvation.</text>
</comment>
<comment type="catalytic activity">
    <reaction evidence="1">
        <text>tRNA(n+1) + phosphate = tRNA(n) + a ribonucleoside 5'-diphosphate</text>
        <dbReference type="Rhea" id="RHEA:10628"/>
        <dbReference type="Rhea" id="RHEA-COMP:17343"/>
        <dbReference type="Rhea" id="RHEA-COMP:17344"/>
        <dbReference type="ChEBI" id="CHEBI:43474"/>
        <dbReference type="ChEBI" id="CHEBI:57930"/>
        <dbReference type="ChEBI" id="CHEBI:173114"/>
        <dbReference type="EC" id="2.7.7.56"/>
    </reaction>
</comment>
<comment type="subunit">
    <text evidence="1">Homohexameric ring arranged as a trimer of dimers.</text>
</comment>
<comment type="similarity">
    <text evidence="1">Belongs to the RNase PH family.</text>
</comment>